<evidence type="ECO:0000255" key="1">
    <source>
        <dbReference type="HAMAP-Rule" id="MF_01569"/>
    </source>
</evidence>
<dbReference type="EC" id="6.1.1.15" evidence="1"/>
<dbReference type="EMBL" id="CP000687">
    <property type="protein sequence ID" value="ABY70417.1"/>
    <property type="molecule type" value="Genomic_DNA"/>
</dbReference>
<dbReference type="RefSeq" id="WP_012263406.1">
    <property type="nucleotide sequence ID" value="NC_010278.1"/>
</dbReference>
<dbReference type="SMR" id="B0BT03"/>
<dbReference type="KEGG" id="apj:APJL_1867"/>
<dbReference type="HOGENOM" id="CLU_016739_0_0_6"/>
<dbReference type="Proteomes" id="UP000008547">
    <property type="component" value="Chromosome"/>
</dbReference>
<dbReference type="GO" id="GO:0005829">
    <property type="term" value="C:cytosol"/>
    <property type="evidence" value="ECO:0007669"/>
    <property type="project" value="TreeGrafter"/>
</dbReference>
<dbReference type="GO" id="GO:0002161">
    <property type="term" value="F:aminoacyl-tRNA deacylase activity"/>
    <property type="evidence" value="ECO:0007669"/>
    <property type="project" value="InterPro"/>
</dbReference>
<dbReference type="GO" id="GO:0005524">
    <property type="term" value="F:ATP binding"/>
    <property type="evidence" value="ECO:0007669"/>
    <property type="project" value="UniProtKB-UniRule"/>
</dbReference>
<dbReference type="GO" id="GO:0004827">
    <property type="term" value="F:proline-tRNA ligase activity"/>
    <property type="evidence" value="ECO:0007669"/>
    <property type="project" value="UniProtKB-UniRule"/>
</dbReference>
<dbReference type="GO" id="GO:0006433">
    <property type="term" value="P:prolyl-tRNA aminoacylation"/>
    <property type="evidence" value="ECO:0007669"/>
    <property type="project" value="UniProtKB-UniRule"/>
</dbReference>
<dbReference type="CDD" id="cd04334">
    <property type="entry name" value="ProRS-INS"/>
    <property type="match status" value="1"/>
</dbReference>
<dbReference type="CDD" id="cd00861">
    <property type="entry name" value="ProRS_anticodon_short"/>
    <property type="match status" value="1"/>
</dbReference>
<dbReference type="CDD" id="cd00779">
    <property type="entry name" value="ProRS_core_prok"/>
    <property type="match status" value="1"/>
</dbReference>
<dbReference type="FunFam" id="3.30.930.10:FF:000043">
    <property type="entry name" value="Proline--tRNA ligase"/>
    <property type="match status" value="1"/>
</dbReference>
<dbReference type="FunFam" id="3.30.930.10:FF:000097">
    <property type="entry name" value="Proline--tRNA ligase"/>
    <property type="match status" value="1"/>
</dbReference>
<dbReference type="FunFam" id="3.40.50.800:FF:000006">
    <property type="entry name" value="Proline--tRNA ligase"/>
    <property type="match status" value="1"/>
</dbReference>
<dbReference type="FunFam" id="3.90.960.10:FF:000001">
    <property type="entry name" value="Proline--tRNA ligase"/>
    <property type="match status" value="1"/>
</dbReference>
<dbReference type="Gene3D" id="3.40.50.800">
    <property type="entry name" value="Anticodon-binding domain"/>
    <property type="match status" value="1"/>
</dbReference>
<dbReference type="Gene3D" id="3.30.930.10">
    <property type="entry name" value="Bira Bifunctional Protein, Domain 2"/>
    <property type="match status" value="2"/>
</dbReference>
<dbReference type="HAMAP" id="MF_01569">
    <property type="entry name" value="Pro_tRNA_synth_type1"/>
    <property type="match status" value="1"/>
</dbReference>
<dbReference type="InterPro" id="IPR002314">
    <property type="entry name" value="aa-tRNA-synt_IIb"/>
</dbReference>
<dbReference type="InterPro" id="IPR006195">
    <property type="entry name" value="aa-tRNA-synth_II"/>
</dbReference>
<dbReference type="InterPro" id="IPR045864">
    <property type="entry name" value="aa-tRNA-synth_II/BPL/LPL"/>
</dbReference>
<dbReference type="InterPro" id="IPR004154">
    <property type="entry name" value="Anticodon-bd"/>
</dbReference>
<dbReference type="InterPro" id="IPR036621">
    <property type="entry name" value="Anticodon-bd_dom_sf"/>
</dbReference>
<dbReference type="InterPro" id="IPR002316">
    <property type="entry name" value="Pro-tRNA-ligase_IIa"/>
</dbReference>
<dbReference type="InterPro" id="IPR004500">
    <property type="entry name" value="Pro-tRNA-synth_IIa_bac-type"/>
</dbReference>
<dbReference type="InterPro" id="IPR023717">
    <property type="entry name" value="Pro-tRNA-Synthase_IIa_type1"/>
</dbReference>
<dbReference type="InterPro" id="IPR050062">
    <property type="entry name" value="Pro-tRNA_synthetase"/>
</dbReference>
<dbReference type="InterPro" id="IPR044140">
    <property type="entry name" value="ProRS_anticodon_short"/>
</dbReference>
<dbReference type="InterPro" id="IPR033730">
    <property type="entry name" value="ProRS_core_prok"/>
</dbReference>
<dbReference type="InterPro" id="IPR036754">
    <property type="entry name" value="YbaK/aa-tRNA-synt-asso_dom_sf"/>
</dbReference>
<dbReference type="InterPro" id="IPR007214">
    <property type="entry name" value="YbaK/aa-tRNA-synth-assoc-dom"/>
</dbReference>
<dbReference type="NCBIfam" id="NF006625">
    <property type="entry name" value="PRK09194.1"/>
    <property type="match status" value="1"/>
</dbReference>
<dbReference type="NCBIfam" id="TIGR00409">
    <property type="entry name" value="proS_fam_II"/>
    <property type="match status" value="1"/>
</dbReference>
<dbReference type="PANTHER" id="PTHR42753">
    <property type="entry name" value="MITOCHONDRIAL RIBOSOME PROTEIN L39/PROLYL-TRNA LIGASE FAMILY MEMBER"/>
    <property type="match status" value="1"/>
</dbReference>
<dbReference type="PANTHER" id="PTHR42753:SF2">
    <property type="entry name" value="PROLINE--TRNA LIGASE"/>
    <property type="match status" value="1"/>
</dbReference>
<dbReference type="Pfam" id="PF03129">
    <property type="entry name" value="HGTP_anticodon"/>
    <property type="match status" value="1"/>
</dbReference>
<dbReference type="Pfam" id="PF00587">
    <property type="entry name" value="tRNA-synt_2b"/>
    <property type="match status" value="1"/>
</dbReference>
<dbReference type="Pfam" id="PF04073">
    <property type="entry name" value="tRNA_edit"/>
    <property type="match status" value="1"/>
</dbReference>
<dbReference type="PIRSF" id="PIRSF001535">
    <property type="entry name" value="ProRS_1"/>
    <property type="match status" value="1"/>
</dbReference>
<dbReference type="PRINTS" id="PR01046">
    <property type="entry name" value="TRNASYNTHPRO"/>
</dbReference>
<dbReference type="SUPFAM" id="SSF52954">
    <property type="entry name" value="Class II aaRS ABD-related"/>
    <property type="match status" value="1"/>
</dbReference>
<dbReference type="SUPFAM" id="SSF55681">
    <property type="entry name" value="Class II aaRS and biotin synthetases"/>
    <property type="match status" value="1"/>
</dbReference>
<dbReference type="SUPFAM" id="SSF55826">
    <property type="entry name" value="YbaK/ProRS associated domain"/>
    <property type="match status" value="1"/>
</dbReference>
<dbReference type="PROSITE" id="PS50862">
    <property type="entry name" value="AA_TRNA_LIGASE_II"/>
    <property type="match status" value="1"/>
</dbReference>
<gene>
    <name evidence="1" type="primary">proS</name>
    <name type="ordered locus">APJL_1867</name>
</gene>
<organism>
    <name type="scientific">Actinobacillus pleuropneumoniae serotype 3 (strain JL03)</name>
    <dbReference type="NCBI Taxonomy" id="434271"/>
    <lineage>
        <taxon>Bacteria</taxon>
        <taxon>Pseudomonadati</taxon>
        <taxon>Pseudomonadota</taxon>
        <taxon>Gammaproteobacteria</taxon>
        <taxon>Pasteurellales</taxon>
        <taxon>Pasteurellaceae</taxon>
        <taxon>Actinobacillus</taxon>
    </lineage>
</organism>
<proteinExistence type="inferred from homology"/>
<protein>
    <recommendedName>
        <fullName evidence="1">Proline--tRNA ligase</fullName>
        <ecNumber evidence="1">6.1.1.15</ecNumber>
    </recommendedName>
    <alternativeName>
        <fullName evidence="1">Prolyl-tRNA synthetase</fullName>
        <shortName evidence="1">ProRS</shortName>
    </alternativeName>
</protein>
<keyword id="KW-0030">Aminoacyl-tRNA synthetase</keyword>
<keyword id="KW-0067">ATP-binding</keyword>
<keyword id="KW-0963">Cytoplasm</keyword>
<keyword id="KW-0436">Ligase</keyword>
<keyword id="KW-0547">Nucleotide-binding</keyword>
<keyword id="KW-0648">Protein biosynthesis</keyword>
<accession>B0BT03</accession>
<comment type="function">
    <text evidence="1">Catalyzes the attachment of proline to tRNA(Pro) in a two-step reaction: proline is first activated by ATP to form Pro-AMP and then transferred to the acceptor end of tRNA(Pro). As ProRS can inadvertently accommodate and process non-cognate amino acids such as alanine and cysteine, to avoid such errors it has two additional distinct editing activities against alanine. One activity is designated as 'pretransfer' editing and involves the tRNA(Pro)-independent hydrolysis of activated Ala-AMP. The other activity is designated 'posttransfer' editing and involves deacylation of mischarged Ala-tRNA(Pro). The misacylated Cys-tRNA(Pro) is not edited by ProRS.</text>
</comment>
<comment type="catalytic activity">
    <reaction evidence="1">
        <text>tRNA(Pro) + L-proline + ATP = L-prolyl-tRNA(Pro) + AMP + diphosphate</text>
        <dbReference type="Rhea" id="RHEA:14305"/>
        <dbReference type="Rhea" id="RHEA-COMP:9700"/>
        <dbReference type="Rhea" id="RHEA-COMP:9702"/>
        <dbReference type="ChEBI" id="CHEBI:30616"/>
        <dbReference type="ChEBI" id="CHEBI:33019"/>
        <dbReference type="ChEBI" id="CHEBI:60039"/>
        <dbReference type="ChEBI" id="CHEBI:78442"/>
        <dbReference type="ChEBI" id="CHEBI:78532"/>
        <dbReference type="ChEBI" id="CHEBI:456215"/>
        <dbReference type="EC" id="6.1.1.15"/>
    </reaction>
</comment>
<comment type="subunit">
    <text evidence="1">Homodimer.</text>
</comment>
<comment type="subcellular location">
    <subcellularLocation>
        <location evidence="1">Cytoplasm</location>
    </subcellularLocation>
</comment>
<comment type="domain">
    <text evidence="1">Consists of three domains: the N-terminal catalytic domain, the editing domain and the C-terminal anticodon-binding domain.</text>
</comment>
<comment type="similarity">
    <text evidence="1">Belongs to the class-II aminoacyl-tRNA synthetase family. ProS type 1 subfamily.</text>
</comment>
<reference key="1">
    <citation type="journal article" date="2008" name="PLoS ONE">
        <title>Genome biology of Actinobacillus pleuropneumoniae JL03, an isolate of serotype 3 prevalent in China.</title>
        <authorList>
            <person name="Xu Z."/>
            <person name="Zhou Y."/>
            <person name="Li L."/>
            <person name="Zhou R."/>
            <person name="Xiao S."/>
            <person name="Wan Y."/>
            <person name="Zhang S."/>
            <person name="Wang K."/>
            <person name="Li W."/>
            <person name="Li L."/>
            <person name="Jin H."/>
            <person name="Kang M."/>
            <person name="Dalai B."/>
            <person name="Li T."/>
            <person name="Liu L."/>
            <person name="Cheng Y."/>
            <person name="Zhang L."/>
            <person name="Xu T."/>
            <person name="Zheng H."/>
            <person name="Pu S."/>
            <person name="Wang B."/>
            <person name="Gu W."/>
            <person name="Zhang X.L."/>
            <person name="Zhu G.-F."/>
            <person name="Wang S."/>
            <person name="Zhao G.-P."/>
            <person name="Chen H."/>
        </authorList>
    </citation>
    <scope>NUCLEOTIDE SEQUENCE [LARGE SCALE GENOMIC DNA]</scope>
    <source>
        <strain>JL03</strain>
    </source>
</reference>
<sequence length="571" mass="63548">MRTSQYLFSTLKETPNDAQVVSHQLMLRAGMIRPMASGLYNWLPTGIKVLKKVENIIREEMNKGGAIEVLMPVVQPAELWQESGRWNDYGAELLRFVDRGSRDFVLGPTHEEVITDLVRREVSSYKQLPLNLYQTQTKFRDEVRPRFGVMRSREFVMKDAYSFHVDKASLQETYDVMYQVYSNIFTRLGLDFRAVQADTGSIGGSASHEFQVLASSGEDDVVFSTESDFAANIELAEAVAVGERQAPTAEMQLVDTPNAKTINELVEQFNLPIEKTVKTLIVKGATEEQSLVALVLRGDHELNEIKAQKHPLVADPLEFADEAEIKAKIGAGVGSLGVINLNVPAIIDRSVAVMSDFGCGANIDGKHYFNVNWERDVAMPEVADLRNVVEGDPSPDGKGVLQIKRGIEVGHIFQLGTKYSEAMKATVQGEDGKPLVMTMGCYGIGVTRVVAAAIEQHHDERGIIWPSDEIAPFTVAIVPMNMHKSESVQQFSEELYRTLKAQGVDVIFDDRKERPGVMFADMELIGVPHMVVIGEKNLANGEIEYKNRRTGEKQMIAKDQLLAFLKENVKA</sequence>
<feature type="chain" id="PRO_1000199346" description="Proline--tRNA ligase">
    <location>
        <begin position="1"/>
        <end position="571"/>
    </location>
</feature>
<name>SYP_ACTPJ</name>